<gene>
    <name evidence="1" type="primary">aat</name>
    <name type="ordered locus">R01318</name>
    <name type="ORF">SMc01346</name>
</gene>
<evidence type="ECO:0000255" key="1">
    <source>
        <dbReference type="HAMAP-Rule" id="MF_00688"/>
    </source>
</evidence>
<accession>Q92QK2</accession>
<reference key="1">
    <citation type="journal article" date="2001" name="Proc. Natl. Acad. Sci. U.S.A.">
        <title>Analysis of the chromosome sequence of the legume symbiont Sinorhizobium meliloti strain 1021.</title>
        <authorList>
            <person name="Capela D."/>
            <person name="Barloy-Hubler F."/>
            <person name="Gouzy J."/>
            <person name="Bothe G."/>
            <person name="Ampe F."/>
            <person name="Batut J."/>
            <person name="Boistard P."/>
            <person name="Becker A."/>
            <person name="Boutry M."/>
            <person name="Cadieu E."/>
            <person name="Dreano S."/>
            <person name="Gloux S."/>
            <person name="Godrie T."/>
            <person name="Goffeau A."/>
            <person name="Kahn D."/>
            <person name="Kiss E."/>
            <person name="Lelaure V."/>
            <person name="Masuy D."/>
            <person name="Pohl T."/>
            <person name="Portetelle D."/>
            <person name="Puehler A."/>
            <person name="Purnelle B."/>
            <person name="Ramsperger U."/>
            <person name="Renard C."/>
            <person name="Thebault P."/>
            <person name="Vandenbol M."/>
            <person name="Weidner S."/>
            <person name="Galibert F."/>
        </authorList>
    </citation>
    <scope>NUCLEOTIDE SEQUENCE [LARGE SCALE GENOMIC DNA]</scope>
    <source>
        <strain>1021</strain>
    </source>
</reference>
<reference key="2">
    <citation type="journal article" date="2001" name="Science">
        <title>The composite genome of the legume symbiont Sinorhizobium meliloti.</title>
        <authorList>
            <person name="Galibert F."/>
            <person name="Finan T.M."/>
            <person name="Long S.R."/>
            <person name="Puehler A."/>
            <person name="Abola P."/>
            <person name="Ampe F."/>
            <person name="Barloy-Hubler F."/>
            <person name="Barnett M.J."/>
            <person name="Becker A."/>
            <person name="Boistard P."/>
            <person name="Bothe G."/>
            <person name="Boutry M."/>
            <person name="Bowser L."/>
            <person name="Buhrmester J."/>
            <person name="Cadieu E."/>
            <person name="Capela D."/>
            <person name="Chain P."/>
            <person name="Cowie A."/>
            <person name="Davis R.W."/>
            <person name="Dreano S."/>
            <person name="Federspiel N.A."/>
            <person name="Fisher R.F."/>
            <person name="Gloux S."/>
            <person name="Godrie T."/>
            <person name="Goffeau A."/>
            <person name="Golding B."/>
            <person name="Gouzy J."/>
            <person name="Gurjal M."/>
            <person name="Hernandez-Lucas I."/>
            <person name="Hong A."/>
            <person name="Huizar L."/>
            <person name="Hyman R.W."/>
            <person name="Jones T."/>
            <person name="Kahn D."/>
            <person name="Kahn M.L."/>
            <person name="Kalman S."/>
            <person name="Keating D.H."/>
            <person name="Kiss E."/>
            <person name="Komp C."/>
            <person name="Lelaure V."/>
            <person name="Masuy D."/>
            <person name="Palm C."/>
            <person name="Peck M.C."/>
            <person name="Pohl T.M."/>
            <person name="Portetelle D."/>
            <person name="Purnelle B."/>
            <person name="Ramsperger U."/>
            <person name="Surzycki R."/>
            <person name="Thebault P."/>
            <person name="Vandenbol M."/>
            <person name="Vorhoelter F.J."/>
            <person name="Weidner S."/>
            <person name="Wells D.H."/>
            <person name="Wong K."/>
            <person name="Yeh K.-C."/>
            <person name="Batut J."/>
        </authorList>
    </citation>
    <scope>NUCLEOTIDE SEQUENCE [LARGE SCALE GENOMIC DNA]</scope>
    <source>
        <strain>1021</strain>
    </source>
</reference>
<name>LFTR_RHIME</name>
<protein>
    <recommendedName>
        <fullName evidence="1">Leucyl/phenylalanyl-tRNA--protein transferase</fullName>
        <ecNumber evidence="1">2.3.2.6</ecNumber>
    </recommendedName>
    <alternativeName>
        <fullName evidence="1">L/F-transferase</fullName>
    </alternativeName>
    <alternativeName>
        <fullName evidence="1">Leucyltransferase</fullName>
    </alternativeName>
    <alternativeName>
        <fullName evidence="1">Phenyalanyltransferase</fullName>
    </alternativeName>
</protein>
<sequence length="204" mass="22784">MKETRSKQPDITPDMLLRAYSIGLFPMADSADDPELFWVEPEIRGIIPLDRFHVSRSLAKAIRRRPFDIRFDTAFAEVMEGCAQPAPDRPTTWINDTIRSLYAALHNMGHAHSVEAWEGDALVGGLYGVSLGAAFFGESMFSRRTGASKICLVHLVERLRSKGFQLLDTQFTTEHLKSFGAVDVPKAQYEVLLAKAIASPNLEF</sequence>
<proteinExistence type="inferred from homology"/>
<keyword id="KW-0012">Acyltransferase</keyword>
<keyword id="KW-0963">Cytoplasm</keyword>
<keyword id="KW-1185">Reference proteome</keyword>
<keyword id="KW-0808">Transferase</keyword>
<comment type="function">
    <text evidence="1">Functions in the N-end rule pathway of protein degradation where it conjugates Leu, Phe and, less efficiently, Met from aminoacyl-tRNAs to the N-termini of proteins containing an N-terminal arginine or lysine.</text>
</comment>
<comment type="catalytic activity">
    <reaction evidence="1">
        <text>N-terminal L-lysyl-[protein] + L-leucyl-tRNA(Leu) = N-terminal L-leucyl-L-lysyl-[protein] + tRNA(Leu) + H(+)</text>
        <dbReference type="Rhea" id="RHEA:12340"/>
        <dbReference type="Rhea" id="RHEA-COMP:9613"/>
        <dbReference type="Rhea" id="RHEA-COMP:9622"/>
        <dbReference type="Rhea" id="RHEA-COMP:12670"/>
        <dbReference type="Rhea" id="RHEA-COMP:12671"/>
        <dbReference type="ChEBI" id="CHEBI:15378"/>
        <dbReference type="ChEBI" id="CHEBI:65249"/>
        <dbReference type="ChEBI" id="CHEBI:78442"/>
        <dbReference type="ChEBI" id="CHEBI:78494"/>
        <dbReference type="ChEBI" id="CHEBI:133043"/>
        <dbReference type="EC" id="2.3.2.6"/>
    </reaction>
</comment>
<comment type="catalytic activity">
    <reaction evidence="1">
        <text>N-terminal L-arginyl-[protein] + L-leucyl-tRNA(Leu) = N-terminal L-leucyl-L-arginyl-[protein] + tRNA(Leu) + H(+)</text>
        <dbReference type="Rhea" id="RHEA:50416"/>
        <dbReference type="Rhea" id="RHEA-COMP:9613"/>
        <dbReference type="Rhea" id="RHEA-COMP:9622"/>
        <dbReference type="Rhea" id="RHEA-COMP:12672"/>
        <dbReference type="Rhea" id="RHEA-COMP:12673"/>
        <dbReference type="ChEBI" id="CHEBI:15378"/>
        <dbReference type="ChEBI" id="CHEBI:64719"/>
        <dbReference type="ChEBI" id="CHEBI:78442"/>
        <dbReference type="ChEBI" id="CHEBI:78494"/>
        <dbReference type="ChEBI" id="CHEBI:133044"/>
        <dbReference type="EC" id="2.3.2.6"/>
    </reaction>
</comment>
<comment type="catalytic activity">
    <reaction evidence="1">
        <text>L-phenylalanyl-tRNA(Phe) + an N-terminal L-alpha-aminoacyl-[protein] = an N-terminal L-phenylalanyl-L-alpha-aminoacyl-[protein] + tRNA(Phe)</text>
        <dbReference type="Rhea" id="RHEA:43632"/>
        <dbReference type="Rhea" id="RHEA-COMP:9668"/>
        <dbReference type="Rhea" id="RHEA-COMP:9699"/>
        <dbReference type="Rhea" id="RHEA-COMP:10636"/>
        <dbReference type="Rhea" id="RHEA-COMP:10637"/>
        <dbReference type="ChEBI" id="CHEBI:78442"/>
        <dbReference type="ChEBI" id="CHEBI:78531"/>
        <dbReference type="ChEBI" id="CHEBI:78597"/>
        <dbReference type="ChEBI" id="CHEBI:83561"/>
        <dbReference type="EC" id="2.3.2.6"/>
    </reaction>
</comment>
<comment type="subcellular location">
    <subcellularLocation>
        <location evidence="1">Cytoplasm</location>
    </subcellularLocation>
</comment>
<comment type="similarity">
    <text evidence="1">Belongs to the L/F-transferase family.</text>
</comment>
<dbReference type="EC" id="2.3.2.6" evidence="1"/>
<dbReference type="EMBL" id="AL591688">
    <property type="protein sequence ID" value="CAC45897.1"/>
    <property type="molecule type" value="Genomic_DNA"/>
</dbReference>
<dbReference type="RefSeq" id="NP_385424.1">
    <property type="nucleotide sequence ID" value="NC_003047.1"/>
</dbReference>
<dbReference type="RefSeq" id="WP_003533070.1">
    <property type="nucleotide sequence ID" value="NC_003047.1"/>
</dbReference>
<dbReference type="SMR" id="Q92QK2"/>
<dbReference type="EnsemblBacteria" id="CAC45897">
    <property type="protein sequence ID" value="CAC45897"/>
    <property type="gene ID" value="SMc01346"/>
</dbReference>
<dbReference type="KEGG" id="sme:SMc01346"/>
<dbReference type="PATRIC" id="fig|266834.11.peg.2732"/>
<dbReference type="eggNOG" id="COG2360">
    <property type="taxonomic scope" value="Bacteria"/>
</dbReference>
<dbReference type="HOGENOM" id="CLU_075045_1_1_5"/>
<dbReference type="OrthoDB" id="9790282at2"/>
<dbReference type="Proteomes" id="UP000001976">
    <property type="component" value="Chromosome"/>
</dbReference>
<dbReference type="GO" id="GO:0005737">
    <property type="term" value="C:cytoplasm"/>
    <property type="evidence" value="ECO:0007669"/>
    <property type="project" value="UniProtKB-SubCell"/>
</dbReference>
<dbReference type="GO" id="GO:0008914">
    <property type="term" value="F:leucyl-tRNA--protein transferase activity"/>
    <property type="evidence" value="ECO:0007669"/>
    <property type="project" value="UniProtKB-UniRule"/>
</dbReference>
<dbReference type="GO" id="GO:0030163">
    <property type="term" value="P:protein catabolic process"/>
    <property type="evidence" value="ECO:0007669"/>
    <property type="project" value="UniProtKB-UniRule"/>
</dbReference>
<dbReference type="FunFam" id="3.40.630.70:FF:000001">
    <property type="entry name" value="Leucyl/phenylalanyl-tRNA--protein transferase"/>
    <property type="match status" value="1"/>
</dbReference>
<dbReference type="Gene3D" id="3.40.630.70">
    <property type="entry name" value="Leucyl/phenylalanyl-tRNA-protein transferase, C-terminal domain"/>
    <property type="match status" value="1"/>
</dbReference>
<dbReference type="HAMAP" id="MF_00688">
    <property type="entry name" value="Leu_Phe_trans"/>
    <property type="match status" value="1"/>
</dbReference>
<dbReference type="InterPro" id="IPR016181">
    <property type="entry name" value="Acyl_CoA_acyltransferase"/>
</dbReference>
<dbReference type="InterPro" id="IPR004616">
    <property type="entry name" value="Leu/Phe-tRNA_Trfase"/>
</dbReference>
<dbReference type="InterPro" id="IPR042203">
    <property type="entry name" value="Leu/Phe-tRNA_Trfase_C"/>
</dbReference>
<dbReference type="NCBIfam" id="TIGR00667">
    <property type="entry name" value="aat"/>
    <property type="match status" value="1"/>
</dbReference>
<dbReference type="PANTHER" id="PTHR30098">
    <property type="entry name" value="LEUCYL/PHENYLALANYL-TRNA--PROTEIN TRANSFERASE"/>
    <property type="match status" value="1"/>
</dbReference>
<dbReference type="PANTHER" id="PTHR30098:SF2">
    <property type="entry name" value="LEUCYL_PHENYLALANYL-TRNA--PROTEIN TRANSFERASE"/>
    <property type="match status" value="1"/>
</dbReference>
<dbReference type="Pfam" id="PF03588">
    <property type="entry name" value="Leu_Phe_trans"/>
    <property type="match status" value="1"/>
</dbReference>
<dbReference type="SUPFAM" id="SSF55729">
    <property type="entry name" value="Acyl-CoA N-acyltransferases (Nat)"/>
    <property type="match status" value="1"/>
</dbReference>
<feature type="chain" id="PRO_0000207239" description="Leucyl/phenylalanyl-tRNA--protein transferase">
    <location>
        <begin position="1"/>
        <end position="204"/>
    </location>
</feature>
<organism>
    <name type="scientific">Rhizobium meliloti (strain 1021)</name>
    <name type="common">Ensifer meliloti</name>
    <name type="synonym">Sinorhizobium meliloti</name>
    <dbReference type="NCBI Taxonomy" id="266834"/>
    <lineage>
        <taxon>Bacteria</taxon>
        <taxon>Pseudomonadati</taxon>
        <taxon>Pseudomonadota</taxon>
        <taxon>Alphaproteobacteria</taxon>
        <taxon>Hyphomicrobiales</taxon>
        <taxon>Rhizobiaceae</taxon>
        <taxon>Sinorhizobium/Ensifer group</taxon>
        <taxon>Sinorhizobium</taxon>
    </lineage>
</organism>